<dbReference type="EMBL" id="CP000024">
    <property type="protein sequence ID" value="AAV62133.1"/>
    <property type="molecule type" value="Genomic_DNA"/>
</dbReference>
<dbReference type="SMR" id="Q5M0W4"/>
<dbReference type="KEGG" id="stc:str0537"/>
<dbReference type="HOGENOM" id="CLU_086499_3_2_9"/>
<dbReference type="GO" id="GO:0022625">
    <property type="term" value="C:cytosolic large ribosomal subunit"/>
    <property type="evidence" value="ECO:0007669"/>
    <property type="project" value="TreeGrafter"/>
</dbReference>
<dbReference type="GO" id="GO:0003729">
    <property type="term" value="F:mRNA binding"/>
    <property type="evidence" value="ECO:0007669"/>
    <property type="project" value="TreeGrafter"/>
</dbReference>
<dbReference type="GO" id="GO:0003735">
    <property type="term" value="F:structural constituent of ribosome"/>
    <property type="evidence" value="ECO:0007669"/>
    <property type="project" value="InterPro"/>
</dbReference>
<dbReference type="GO" id="GO:0006412">
    <property type="term" value="P:translation"/>
    <property type="evidence" value="ECO:0007669"/>
    <property type="project" value="UniProtKB-UniRule"/>
</dbReference>
<dbReference type="CDD" id="cd00387">
    <property type="entry name" value="Ribosomal_L7_L12"/>
    <property type="match status" value="1"/>
</dbReference>
<dbReference type="FunFam" id="1.20.5.710:FF:000002">
    <property type="entry name" value="50S ribosomal protein L7/L12"/>
    <property type="match status" value="1"/>
</dbReference>
<dbReference type="FunFam" id="3.30.1390.10:FF:000001">
    <property type="entry name" value="50S ribosomal protein L7/L12"/>
    <property type="match status" value="1"/>
</dbReference>
<dbReference type="Gene3D" id="3.30.1390.10">
    <property type="match status" value="1"/>
</dbReference>
<dbReference type="Gene3D" id="1.20.5.710">
    <property type="entry name" value="Single helix bin"/>
    <property type="match status" value="1"/>
</dbReference>
<dbReference type="HAMAP" id="MF_00368">
    <property type="entry name" value="Ribosomal_bL12"/>
    <property type="match status" value="1"/>
</dbReference>
<dbReference type="InterPro" id="IPR000206">
    <property type="entry name" value="Ribosomal_bL12"/>
</dbReference>
<dbReference type="InterPro" id="IPR013823">
    <property type="entry name" value="Ribosomal_bL12_C"/>
</dbReference>
<dbReference type="InterPro" id="IPR014719">
    <property type="entry name" value="Ribosomal_bL12_C/ClpS-like"/>
</dbReference>
<dbReference type="InterPro" id="IPR008932">
    <property type="entry name" value="Ribosomal_bL12_oligo"/>
</dbReference>
<dbReference type="InterPro" id="IPR036235">
    <property type="entry name" value="Ribosomal_bL12_oligo_N_sf"/>
</dbReference>
<dbReference type="NCBIfam" id="TIGR00855">
    <property type="entry name" value="L12"/>
    <property type="match status" value="1"/>
</dbReference>
<dbReference type="PANTHER" id="PTHR45987">
    <property type="entry name" value="39S RIBOSOMAL PROTEIN L12"/>
    <property type="match status" value="1"/>
</dbReference>
<dbReference type="PANTHER" id="PTHR45987:SF4">
    <property type="entry name" value="LARGE RIBOSOMAL SUBUNIT PROTEIN BL12M"/>
    <property type="match status" value="1"/>
</dbReference>
<dbReference type="Pfam" id="PF00542">
    <property type="entry name" value="Ribosomal_L12"/>
    <property type="match status" value="1"/>
</dbReference>
<dbReference type="Pfam" id="PF16320">
    <property type="entry name" value="Ribosomal_L12_N"/>
    <property type="match status" value="1"/>
</dbReference>
<dbReference type="SUPFAM" id="SSF54736">
    <property type="entry name" value="ClpS-like"/>
    <property type="match status" value="1"/>
</dbReference>
<dbReference type="SUPFAM" id="SSF48300">
    <property type="entry name" value="Ribosomal protein L7/12, oligomerisation (N-terminal) domain"/>
    <property type="match status" value="1"/>
</dbReference>
<keyword id="KW-0687">Ribonucleoprotein</keyword>
<keyword id="KW-0689">Ribosomal protein</keyword>
<gene>
    <name evidence="1" type="primary">rplL</name>
    <name type="ordered locus">str0537</name>
</gene>
<proteinExistence type="inferred from homology"/>
<feature type="chain" id="PRO_0000243505" description="Large ribosomal subunit protein bL12">
    <location>
        <begin position="1"/>
        <end position="127"/>
    </location>
</feature>
<organism>
    <name type="scientific">Streptococcus thermophilus (strain CNRZ 1066)</name>
    <dbReference type="NCBI Taxonomy" id="299768"/>
    <lineage>
        <taxon>Bacteria</taxon>
        <taxon>Bacillati</taxon>
        <taxon>Bacillota</taxon>
        <taxon>Bacilli</taxon>
        <taxon>Lactobacillales</taxon>
        <taxon>Streptococcaceae</taxon>
        <taxon>Streptococcus</taxon>
    </lineage>
</organism>
<reference key="1">
    <citation type="journal article" date="2004" name="Nat. Biotechnol.">
        <title>Complete sequence and comparative genome analysis of the dairy bacterium Streptococcus thermophilus.</title>
        <authorList>
            <person name="Bolotin A."/>
            <person name="Quinquis B."/>
            <person name="Renault P."/>
            <person name="Sorokin A."/>
            <person name="Ehrlich S.D."/>
            <person name="Kulakauskas S."/>
            <person name="Lapidus A."/>
            <person name="Goltsman E."/>
            <person name="Mazur M."/>
            <person name="Pusch G.D."/>
            <person name="Fonstein M."/>
            <person name="Overbeek R."/>
            <person name="Kyprides N."/>
            <person name="Purnelle B."/>
            <person name="Prozzi D."/>
            <person name="Ngui K."/>
            <person name="Masuy D."/>
            <person name="Hancy F."/>
            <person name="Burteau S."/>
            <person name="Boutry M."/>
            <person name="Delcour J."/>
            <person name="Goffeau A."/>
            <person name="Hols P."/>
        </authorList>
    </citation>
    <scope>NUCLEOTIDE SEQUENCE [LARGE SCALE GENOMIC DNA]</scope>
    <source>
        <strain>CNRZ 1066</strain>
    </source>
</reference>
<name>RL7_STRT1</name>
<protein>
    <recommendedName>
        <fullName evidence="1">Large ribosomal subunit protein bL12</fullName>
    </recommendedName>
    <alternativeName>
        <fullName evidence="2">50S ribosomal protein L7/L12</fullName>
    </alternativeName>
</protein>
<evidence type="ECO:0000255" key="1">
    <source>
        <dbReference type="HAMAP-Rule" id="MF_00368"/>
    </source>
</evidence>
<evidence type="ECO:0000305" key="2"/>
<comment type="function">
    <text evidence="1">Forms part of the ribosomal stalk which helps the ribosome interact with GTP-bound translation factors. Is thus essential for accurate translation.</text>
</comment>
<comment type="subunit">
    <text evidence="1">Homodimer. Part of the ribosomal stalk of the 50S ribosomal subunit. Forms a multimeric L10(L12)X complex, where L10 forms an elongated spine to which 2 to 4 L12 dimers bind in a sequential fashion. Binds GTP-bound translation factors.</text>
</comment>
<comment type="similarity">
    <text evidence="1">Belongs to the bacterial ribosomal protein bL12 family.</text>
</comment>
<accession>Q5M0W4</accession>
<sequence length="127" mass="12948">MEEITMALNIENIIAEIKEASILELNDLVKAIEEEFGVTAAAPVAAAADGAADAGAAKDSFDVELTSAGDKKVGVIKVVREITGEGLKEAKAIVDGAPSVIKEGVAAAEAEEIKAKLEEAGASVTLK</sequence>